<name>RS20_FINM2</name>
<evidence type="ECO:0000255" key="1">
    <source>
        <dbReference type="HAMAP-Rule" id="MF_00500"/>
    </source>
</evidence>
<evidence type="ECO:0000305" key="2"/>
<organism>
    <name type="scientific">Finegoldia magna (strain ATCC 29328 / DSM 20472 / WAL 2508)</name>
    <name type="common">Peptostreptococcus magnus</name>
    <dbReference type="NCBI Taxonomy" id="334413"/>
    <lineage>
        <taxon>Bacteria</taxon>
        <taxon>Bacillati</taxon>
        <taxon>Bacillota</taxon>
        <taxon>Tissierellia</taxon>
        <taxon>Tissierellales</taxon>
        <taxon>Peptoniphilaceae</taxon>
        <taxon>Finegoldia</taxon>
    </lineage>
</organism>
<proteinExistence type="inferred from homology"/>
<protein>
    <recommendedName>
        <fullName evidence="1">Small ribosomal subunit protein bS20</fullName>
    </recommendedName>
    <alternativeName>
        <fullName evidence="2">30S ribosomal protein S20</fullName>
    </alternativeName>
</protein>
<dbReference type="EMBL" id="AP008971">
    <property type="protein sequence ID" value="BAG08204.1"/>
    <property type="molecule type" value="Genomic_DNA"/>
</dbReference>
<dbReference type="RefSeq" id="WP_002838176.1">
    <property type="nucleotide sequence ID" value="NC_010376.1"/>
</dbReference>
<dbReference type="SMR" id="B0S1G4"/>
<dbReference type="STRING" id="334413.FMG_0786"/>
<dbReference type="KEGG" id="fma:FMG_0786"/>
<dbReference type="eggNOG" id="COG0268">
    <property type="taxonomic scope" value="Bacteria"/>
</dbReference>
<dbReference type="HOGENOM" id="CLU_160655_3_0_9"/>
<dbReference type="Proteomes" id="UP000001319">
    <property type="component" value="Chromosome"/>
</dbReference>
<dbReference type="GO" id="GO:0005829">
    <property type="term" value="C:cytosol"/>
    <property type="evidence" value="ECO:0007669"/>
    <property type="project" value="TreeGrafter"/>
</dbReference>
<dbReference type="GO" id="GO:0015935">
    <property type="term" value="C:small ribosomal subunit"/>
    <property type="evidence" value="ECO:0007669"/>
    <property type="project" value="TreeGrafter"/>
</dbReference>
<dbReference type="GO" id="GO:0070181">
    <property type="term" value="F:small ribosomal subunit rRNA binding"/>
    <property type="evidence" value="ECO:0007669"/>
    <property type="project" value="TreeGrafter"/>
</dbReference>
<dbReference type="GO" id="GO:0003735">
    <property type="term" value="F:structural constituent of ribosome"/>
    <property type="evidence" value="ECO:0007669"/>
    <property type="project" value="InterPro"/>
</dbReference>
<dbReference type="GO" id="GO:0006412">
    <property type="term" value="P:translation"/>
    <property type="evidence" value="ECO:0007669"/>
    <property type="project" value="UniProtKB-UniRule"/>
</dbReference>
<dbReference type="FunFam" id="1.20.58.110:FF:000001">
    <property type="entry name" value="30S ribosomal protein S20"/>
    <property type="match status" value="1"/>
</dbReference>
<dbReference type="Gene3D" id="1.20.58.110">
    <property type="entry name" value="Ribosomal protein S20"/>
    <property type="match status" value="1"/>
</dbReference>
<dbReference type="HAMAP" id="MF_00500">
    <property type="entry name" value="Ribosomal_bS20"/>
    <property type="match status" value="1"/>
</dbReference>
<dbReference type="InterPro" id="IPR002583">
    <property type="entry name" value="Ribosomal_bS20"/>
</dbReference>
<dbReference type="InterPro" id="IPR036510">
    <property type="entry name" value="Ribosomal_bS20_sf"/>
</dbReference>
<dbReference type="NCBIfam" id="TIGR00029">
    <property type="entry name" value="S20"/>
    <property type="match status" value="1"/>
</dbReference>
<dbReference type="PANTHER" id="PTHR33398">
    <property type="entry name" value="30S RIBOSOMAL PROTEIN S20"/>
    <property type="match status" value="1"/>
</dbReference>
<dbReference type="PANTHER" id="PTHR33398:SF1">
    <property type="entry name" value="SMALL RIBOSOMAL SUBUNIT PROTEIN BS20C"/>
    <property type="match status" value="1"/>
</dbReference>
<dbReference type="Pfam" id="PF01649">
    <property type="entry name" value="Ribosomal_S20p"/>
    <property type="match status" value="1"/>
</dbReference>
<dbReference type="SUPFAM" id="SSF46992">
    <property type="entry name" value="Ribosomal protein S20"/>
    <property type="match status" value="1"/>
</dbReference>
<gene>
    <name evidence="1" type="primary">rpsT</name>
    <name type="ordered locus">FMG_0786</name>
</gene>
<keyword id="KW-1185">Reference proteome</keyword>
<keyword id="KW-0687">Ribonucleoprotein</keyword>
<keyword id="KW-0689">Ribosomal protein</keyword>
<keyword id="KW-0694">RNA-binding</keyword>
<keyword id="KW-0699">rRNA-binding</keyword>
<accession>B0S1G4</accession>
<feature type="chain" id="PRO_1000126449" description="Small ribosomal subunit protein bS20">
    <location>
        <begin position="1"/>
        <end position="87"/>
    </location>
</feature>
<sequence length="87" mass="9681">MANIKSAIKRIDVTKLETARNKSKKSAIKTFIKKFEAAIEKNDKEDATKLFNLATKKIDQAASKNTISKNSAAKKISRMAKELNKLA</sequence>
<reference key="1">
    <citation type="journal article" date="2008" name="DNA Res.">
        <title>Complete genome sequence of Finegoldia magna, an anaerobic opportunistic pathogen.</title>
        <authorList>
            <person name="Goto T."/>
            <person name="Yamashita A."/>
            <person name="Hirakawa H."/>
            <person name="Matsutani M."/>
            <person name="Todo K."/>
            <person name="Ohshima K."/>
            <person name="Toh H."/>
            <person name="Miyamoto K."/>
            <person name="Kuhara S."/>
            <person name="Hattori M."/>
            <person name="Shimizu T."/>
            <person name="Akimoto S."/>
        </authorList>
    </citation>
    <scope>NUCLEOTIDE SEQUENCE [LARGE SCALE GENOMIC DNA]</scope>
    <source>
        <strain>ATCC 29328 / DSM 20472 / WAL 2508</strain>
    </source>
</reference>
<comment type="function">
    <text evidence="1">Binds directly to 16S ribosomal RNA.</text>
</comment>
<comment type="similarity">
    <text evidence="1">Belongs to the bacterial ribosomal protein bS20 family.</text>
</comment>